<name>VA5_POLFU</name>
<comment type="subcellular location">
    <subcellularLocation>
        <location>Secreted</location>
    </subcellularLocation>
</comment>
<comment type="tissue specificity">
    <text>Expressed by the venom gland.</text>
</comment>
<comment type="allergen">
    <text>Causes an allergic reaction in human.</text>
</comment>
<comment type="similarity">
    <text evidence="2">Belongs to the CRISP family. Venom allergen 5-like subfamily.</text>
</comment>
<sequence length="205" mass="23068">VDYCKIKCSSGIHTVCQYGESTKPSKNCADKVIKSVGPTEEEKKLIVNEHNRFRQKVAQGLETRGNPGPQPAASDMNNLVWNDELAHIAQVWASQCQILVHDKCRNTAKYQVGQNIAYAGGSKLPDVVSLIKLWENEVKDFNYNKGITKQNFGKVGHYTQMIWAKTKEIGCGSLKYMKNNMQHHYLICNYGPAGNYLGQLPYTKK</sequence>
<proteinExistence type="evidence at protein level"/>
<keyword id="KW-0020">Allergen</keyword>
<keyword id="KW-0903">Direct protein sequencing</keyword>
<keyword id="KW-1015">Disulfide bond</keyword>
<keyword id="KW-0964">Secreted</keyword>
<dbReference type="PIR" id="F44583">
    <property type="entry name" value="F44583"/>
</dbReference>
<dbReference type="SMR" id="P35780"/>
<dbReference type="Allergome" id="3442">
    <property type="allergen name" value="Pol f 5.0101"/>
</dbReference>
<dbReference type="Allergome" id="592">
    <property type="allergen name" value="Pol f 5"/>
</dbReference>
<dbReference type="OrthoDB" id="414826at2759"/>
<dbReference type="GO" id="GO:0005576">
    <property type="term" value="C:extracellular region"/>
    <property type="evidence" value="ECO:0007669"/>
    <property type="project" value="UniProtKB-SubCell"/>
</dbReference>
<dbReference type="CDD" id="cd05380">
    <property type="entry name" value="CAP_euk"/>
    <property type="match status" value="1"/>
</dbReference>
<dbReference type="Gene3D" id="3.40.33.10">
    <property type="entry name" value="CAP"/>
    <property type="match status" value="1"/>
</dbReference>
<dbReference type="InterPro" id="IPR018244">
    <property type="entry name" value="Allrgn_V5/Tpx1_CS"/>
</dbReference>
<dbReference type="InterPro" id="IPR014044">
    <property type="entry name" value="CAP_dom"/>
</dbReference>
<dbReference type="InterPro" id="IPR035940">
    <property type="entry name" value="CAP_sf"/>
</dbReference>
<dbReference type="InterPro" id="IPR001283">
    <property type="entry name" value="CRISP-related"/>
</dbReference>
<dbReference type="InterPro" id="IPR002413">
    <property type="entry name" value="V5_allergen-like"/>
</dbReference>
<dbReference type="PANTHER" id="PTHR10334">
    <property type="entry name" value="CYSTEINE-RICH SECRETORY PROTEIN-RELATED"/>
    <property type="match status" value="1"/>
</dbReference>
<dbReference type="Pfam" id="PF00188">
    <property type="entry name" value="CAP"/>
    <property type="match status" value="1"/>
</dbReference>
<dbReference type="PRINTS" id="PR00838">
    <property type="entry name" value="V5ALLERGEN"/>
</dbReference>
<dbReference type="PRINTS" id="PR00837">
    <property type="entry name" value="V5TPXLIKE"/>
</dbReference>
<dbReference type="SMART" id="SM00198">
    <property type="entry name" value="SCP"/>
    <property type="match status" value="1"/>
</dbReference>
<dbReference type="SUPFAM" id="SSF55797">
    <property type="entry name" value="PR-1-like"/>
    <property type="match status" value="1"/>
</dbReference>
<dbReference type="PROSITE" id="PS01009">
    <property type="entry name" value="CRISP_1"/>
    <property type="match status" value="1"/>
</dbReference>
<dbReference type="PROSITE" id="PS01010">
    <property type="entry name" value="CRISP_2"/>
    <property type="match status" value="1"/>
</dbReference>
<protein>
    <recommendedName>
        <fullName>Venom allergen 5</fullName>
    </recommendedName>
    <alternativeName>
        <fullName>Allergen Pol f V</fullName>
    </alternativeName>
    <alternativeName>
        <fullName>Antigen 5</fullName>
        <shortName>Ag5</shortName>
    </alternativeName>
    <alternativeName>
        <fullName>Cysteine-rich venom protein</fullName>
        <shortName>CRVP</shortName>
    </alternativeName>
    <allergenName>Pol f 5</allergenName>
</protein>
<reference key="1">
    <citation type="journal article" date="1993" name="J. Allergy Clin. Immunol.">
        <title>Allergens in Hymenoptera venom. XXV: the amino acid sequences of antigen 5 molecules and the structural basis of antigenic cross-reactivity.</title>
        <authorList>
            <person name="Hoffman D.R."/>
        </authorList>
    </citation>
    <scope>PROTEIN SEQUENCE</scope>
    <source>
        <tissue>Venom</tissue>
    </source>
</reference>
<organism>
    <name type="scientific">Polistes fuscatus</name>
    <name type="common">Paper wasp</name>
    <dbReference type="NCBI Taxonomy" id="30207"/>
    <lineage>
        <taxon>Eukaryota</taxon>
        <taxon>Metazoa</taxon>
        <taxon>Ecdysozoa</taxon>
        <taxon>Arthropoda</taxon>
        <taxon>Hexapoda</taxon>
        <taxon>Insecta</taxon>
        <taxon>Pterygota</taxon>
        <taxon>Neoptera</taxon>
        <taxon>Endopterygota</taxon>
        <taxon>Hymenoptera</taxon>
        <taxon>Apocrita</taxon>
        <taxon>Aculeata</taxon>
        <taxon>Vespoidea</taxon>
        <taxon>Vespidae</taxon>
        <taxon>Polistinae</taxon>
        <taxon>Polistini</taxon>
        <taxon>Polistes</taxon>
    </lineage>
</organism>
<feature type="chain" id="PRO_0000211536" description="Venom allergen 5">
    <location>
        <begin position="1"/>
        <end position="205"/>
    </location>
</feature>
<feature type="domain" description="SCP">
    <location>
        <begin position="47"/>
        <end position="190"/>
    </location>
</feature>
<feature type="disulfide bond" evidence="1">
    <location>
        <begin position="4"/>
        <end position="16"/>
    </location>
</feature>
<feature type="disulfide bond" evidence="1">
    <location>
        <begin position="8"/>
        <end position="104"/>
    </location>
</feature>
<feature type="disulfide bond" evidence="1">
    <location>
        <begin position="28"/>
        <end position="96"/>
    </location>
</feature>
<feature type="disulfide bond" evidence="1">
    <location>
        <begin position="171"/>
        <end position="188"/>
    </location>
</feature>
<accession>P35780</accession>
<evidence type="ECO:0000250" key="1"/>
<evidence type="ECO:0000305" key="2"/>